<proteinExistence type="inferred from homology"/>
<organism>
    <name type="scientific">Deinococcus radiodurans (strain ATCC 13939 / DSM 20539 / JCM 16871 / CCUG 27074 / LMG 4051 / NBRC 15346 / NCIMB 9279 / VKM B-1422 / R1)</name>
    <dbReference type="NCBI Taxonomy" id="243230"/>
    <lineage>
        <taxon>Bacteria</taxon>
        <taxon>Thermotogati</taxon>
        <taxon>Deinococcota</taxon>
        <taxon>Deinococci</taxon>
        <taxon>Deinococcales</taxon>
        <taxon>Deinococcaceae</taxon>
        <taxon>Deinococcus</taxon>
    </lineage>
</organism>
<reference key="1">
    <citation type="journal article" date="1999" name="Science">
        <title>Genome sequence of the radioresistant bacterium Deinococcus radiodurans R1.</title>
        <authorList>
            <person name="White O."/>
            <person name="Eisen J.A."/>
            <person name="Heidelberg J.F."/>
            <person name="Hickey E.K."/>
            <person name="Peterson J.D."/>
            <person name="Dodson R.J."/>
            <person name="Haft D.H."/>
            <person name="Gwinn M.L."/>
            <person name="Nelson W.C."/>
            <person name="Richardson D.L."/>
            <person name="Moffat K.S."/>
            <person name="Qin H."/>
            <person name="Jiang L."/>
            <person name="Pamphile W."/>
            <person name="Crosby M."/>
            <person name="Shen M."/>
            <person name="Vamathevan J.J."/>
            <person name="Lam P."/>
            <person name="McDonald L.A."/>
            <person name="Utterback T.R."/>
            <person name="Zalewski C."/>
            <person name="Makarova K.S."/>
            <person name="Aravind L."/>
            <person name="Daly M.J."/>
            <person name="Minton K.W."/>
            <person name="Fleischmann R.D."/>
            <person name="Ketchum K.A."/>
            <person name="Nelson K.E."/>
            <person name="Salzberg S.L."/>
            <person name="Smith H.O."/>
            <person name="Venter J.C."/>
            <person name="Fraser C.M."/>
        </authorList>
    </citation>
    <scope>NUCLEOTIDE SEQUENCE [LARGE SCALE GENOMIC DNA]</scope>
    <source>
        <strain>ATCC 13939 / DSM 20539 / JCM 16871 / CCUG 27074 / LMG 4051 / NBRC 15346 / NCIMB 9279 / VKM B-1422 / R1</strain>
    </source>
</reference>
<name>PYRF_DEIRA</name>
<keyword id="KW-0210">Decarboxylase</keyword>
<keyword id="KW-0456">Lyase</keyword>
<keyword id="KW-0665">Pyrimidine biosynthesis</keyword>
<keyword id="KW-1185">Reference proteome</keyword>
<gene>
    <name type="primary">pyrF</name>
    <name type="ordered locus">DR_2200</name>
</gene>
<dbReference type="EC" id="4.1.1.23"/>
<dbReference type="EMBL" id="AE000513">
    <property type="protein sequence ID" value="AAF11749.1"/>
    <property type="status" value="ALT_INIT"/>
    <property type="molecule type" value="Genomic_DNA"/>
</dbReference>
<dbReference type="PIR" id="G75302">
    <property type="entry name" value="G75302"/>
</dbReference>
<dbReference type="RefSeq" id="NP_295922.1">
    <property type="nucleotide sequence ID" value="NC_001263.1"/>
</dbReference>
<dbReference type="RefSeq" id="WP_027479917.1">
    <property type="nucleotide sequence ID" value="NC_001263.1"/>
</dbReference>
<dbReference type="SMR" id="Q9RSC5"/>
<dbReference type="STRING" id="243230.DR_2200"/>
<dbReference type="PaxDb" id="243230-DR_2200"/>
<dbReference type="EnsemblBacteria" id="AAF11749">
    <property type="protein sequence ID" value="AAF11749"/>
    <property type="gene ID" value="DR_2200"/>
</dbReference>
<dbReference type="GeneID" id="69518447"/>
<dbReference type="KEGG" id="dra:DR_2200"/>
<dbReference type="PATRIC" id="fig|243230.17.peg.2426"/>
<dbReference type="eggNOG" id="COG0284">
    <property type="taxonomic scope" value="Bacteria"/>
</dbReference>
<dbReference type="HOGENOM" id="CLU_450357_0_0_0"/>
<dbReference type="InParanoid" id="Q9RSC5"/>
<dbReference type="OrthoDB" id="9808470at2"/>
<dbReference type="UniPathway" id="UPA00070">
    <property type="reaction ID" value="UER00120"/>
</dbReference>
<dbReference type="Proteomes" id="UP000002524">
    <property type="component" value="Chromosome 1"/>
</dbReference>
<dbReference type="GO" id="GO:0004590">
    <property type="term" value="F:orotidine-5'-phosphate decarboxylase activity"/>
    <property type="evidence" value="ECO:0007669"/>
    <property type="project" value="UniProtKB-UniRule"/>
</dbReference>
<dbReference type="GO" id="GO:0006207">
    <property type="term" value="P:'de novo' pyrimidine nucleobase biosynthetic process"/>
    <property type="evidence" value="ECO:0007669"/>
    <property type="project" value="InterPro"/>
</dbReference>
<dbReference type="GO" id="GO:0044205">
    <property type="term" value="P:'de novo' UMP biosynthetic process"/>
    <property type="evidence" value="ECO:0007669"/>
    <property type="project" value="UniProtKB-UniRule"/>
</dbReference>
<dbReference type="CDD" id="cd04725">
    <property type="entry name" value="OMP_decarboxylase_like"/>
    <property type="match status" value="1"/>
</dbReference>
<dbReference type="FunFam" id="3.20.20.70:FF:000246">
    <property type="entry name" value="Orotidine 5'-phosphate decarboxylase"/>
    <property type="match status" value="1"/>
</dbReference>
<dbReference type="Gene3D" id="3.20.20.70">
    <property type="entry name" value="Aldolase class I"/>
    <property type="match status" value="1"/>
</dbReference>
<dbReference type="HAMAP" id="MF_01215">
    <property type="entry name" value="OMPdecase_type2"/>
    <property type="match status" value="1"/>
</dbReference>
<dbReference type="InterPro" id="IPR013785">
    <property type="entry name" value="Aldolase_TIM"/>
</dbReference>
<dbReference type="InterPro" id="IPR018089">
    <property type="entry name" value="OMPdecase_AS"/>
</dbReference>
<dbReference type="InterPro" id="IPR011995">
    <property type="entry name" value="OMPdecase_type-2"/>
</dbReference>
<dbReference type="InterPro" id="IPR001754">
    <property type="entry name" value="OMPdeCOase_dom"/>
</dbReference>
<dbReference type="InterPro" id="IPR011060">
    <property type="entry name" value="RibuloseP-bd_barrel"/>
</dbReference>
<dbReference type="NCBIfam" id="TIGR02127">
    <property type="entry name" value="pyrF_sub2"/>
    <property type="match status" value="1"/>
</dbReference>
<dbReference type="PANTHER" id="PTHR43375">
    <property type="entry name" value="OROTIDINE 5'-PHOSPHATE DECARBOXYLASE"/>
    <property type="match status" value="1"/>
</dbReference>
<dbReference type="PANTHER" id="PTHR43375:SF1">
    <property type="entry name" value="OROTIDINE 5'-PHOSPHATE DECARBOXYLASE"/>
    <property type="match status" value="1"/>
</dbReference>
<dbReference type="Pfam" id="PF00215">
    <property type="entry name" value="OMPdecase"/>
    <property type="match status" value="1"/>
</dbReference>
<dbReference type="SMART" id="SM00934">
    <property type="entry name" value="OMPdecase"/>
    <property type="match status" value="1"/>
</dbReference>
<dbReference type="SUPFAM" id="SSF51366">
    <property type="entry name" value="Ribulose-phoshate binding barrel"/>
    <property type="match status" value="1"/>
</dbReference>
<dbReference type="PROSITE" id="PS00156">
    <property type="entry name" value="OMPDECASE"/>
    <property type="match status" value="1"/>
</dbReference>
<sequence length="272" mass="28066">MTPTFAQAVTERTLSRRTRLCVGLDPRLGEYRDVAQLRQNTLDVLEASAPYAACVKPQLAFFEALGLPGFTLLEEVCAAARTLGLPVLLDGKRGDIGTTAAAYAQGWLGGTHAGDALTVNPFLGFQTLTPFVQAARENGGAIFVLVKTSNPDQQDLQGQGVSERIAVEIARLGDEEGLGDGDYASVGAVVGATHPGDLATFRALMPKALLLLPGLGAQGAQARDLAGAFHAGGTGALASASRAVQYARGLDVGAAREAALALRDELNGALGV</sequence>
<evidence type="ECO:0000250" key="1"/>
<evidence type="ECO:0000305" key="2"/>
<comment type="catalytic activity">
    <reaction>
        <text>orotidine 5'-phosphate + H(+) = UMP + CO2</text>
        <dbReference type="Rhea" id="RHEA:11596"/>
        <dbReference type="ChEBI" id="CHEBI:15378"/>
        <dbReference type="ChEBI" id="CHEBI:16526"/>
        <dbReference type="ChEBI" id="CHEBI:57538"/>
        <dbReference type="ChEBI" id="CHEBI:57865"/>
        <dbReference type="EC" id="4.1.1.23"/>
    </reaction>
</comment>
<comment type="pathway">
    <text>Pyrimidine metabolism; UMP biosynthesis via de novo pathway; UMP from orotate: step 2/2.</text>
</comment>
<comment type="similarity">
    <text evidence="2">Belongs to the OMP decarboxylase family. Type 2 subfamily.</text>
</comment>
<comment type="sequence caution" evidence="2">
    <conflict type="erroneous initiation">
        <sequence resource="EMBL-CDS" id="AAF11749"/>
    </conflict>
</comment>
<feature type="chain" id="PRO_0000134626" description="Orotidine 5'-phosphate decarboxylase">
    <location>
        <begin position="1"/>
        <end position="272"/>
    </location>
</feature>
<feature type="active site" description="Proton donor" evidence="1">
    <location>
        <position position="92"/>
    </location>
</feature>
<protein>
    <recommendedName>
        <fullName>Orotidine 5'-phosphate decarboxylase</fullName>
        <ecNumber>4.1.1.23</ecNumber>
    </recommendedName>
    <alternativeName>
        <fullName>OMP decarboxylase</fullName>
        <shortName>OMPDCase</shortName>
        <shortName>OMPdecase</shortName>
    </alternativeName>
</protein>
<accession>Q9RSC5</accession>